<gene>
    <name evidence="1" type="primary">lexA</name>
    <name type="ordered locus">VS_3006</name>
</gene>
<sequence>MKPLTPRQQQVFDLIKSKIEDCGMPPTRAEIARELGFRSANAAEEHLKALARKEAIEIIPGASRGIRILLEDAANEEQGLPLIGQVAAGEPILAQEHVEMHYQVDPGMFKPQADFLLRVNGESMKDIGIMDGDLLAVHKTQDVRDGQVVVARVDDDVTVKRLERKGSTVLLHAENEEFSPIHVDLESQHLSIEGLAVGIIRNTDWM</sequence>
<name>LEXA_VIBA3</name>
<organism>
    <name type="scientific">Vibrio atlanticus (strain LGP32)</name>
    <name type="common">Vibrio splendidus (strain Mel32)</name>
    <dbReference type="NCBI Taxonomy" id="575788"/>
    <lineage>
        <taxon>Bacteria</taxon>
        <taxon>Pseudomonadati</taxon>
        <taxon>Pseudomonadota</taxon>
        <taxon>Gammaproteobacteria</taxon>
        <taxon>Vibrionales</taxon>
        <taxon>Vibrionaceae</taxon>
        <taxon>Vibrio</taxon>
    </lineage>
</organism>
<dbReference type="EC" id="3.4.21.88" evidence="1"/>
<dbReference type="EMBL" id="FM954972">
    <property type="protein sequence ID" value="CAV20284.1"/>
    <property type="molecule type" value="Genomic_DNA"/>
</dbReference>
<dbReference type="SMR" id="B7VM94"/>
<dbReference type="STRING" id="575788.VS_3006"/>
<dbReference type="MEROPS" id="S24.001"/>
<dbReference type="KEGG" id="vsp:VS_3006"/>
<dbReference type="eggNOG" id="COG1974">
    <property type="taxonomic scope" value="Bacteria"/>
</dbReference>
<dbReference type="HOGENOM" id="CLU_066192_45_3_6"/>
<dbReference type="Proteomes" id="UP000009100">
    <property type="component" value="Chromosome 1"/>
</dbReference>
<dbReference type="GO" id="GO:0003677">
    <property type="term" value="F:DNA binding"/>
    <property type="evidence" value="ECO:0007669"/>
    <property type="project" value="UniProtKB-UniRule"/>
</dbReference>
<dbReference type="GO" id="GO:0004252">
    <property type="term" value="F:serine-type endopeptidase activity"/>
    <property type="evidence" value="ECO:0007669"/>
    <property type="project" value="UniProtKB-UniRule"/>
</dbReference>
<dbReference type="GO" id="GO:0006281">
    <property type="term" value="P:DNA repair"/>
    <property type="evidence" value="ECO:0007669"/>
    <property type="project" value="UniProtKB-UniRule"/>
</dbReference>
<dbReference type="GO" id="GO:0006260">
    <property type="term" value="P:DNA replication"/>
    <property type="evidence" value="ECO:0007669"/>
    <property type="project" value="UniProtKB-UniRule"/>
</dbReference>
<dbReference type="GO" id="GO:0045892">
    <property type="term" value="P:negative regulation of DNA-templated transcription"/>
    <property type="evidence" value="ECO:0007669"/>
    <property type="project" value="UniProtKB-UniRule"/>
</dbReference>
<dbReference type="GO" id="GO:0006508">
    <property type="term" value="P:proteolysis"/>
    <property type="evidence" value="ECO:0007669"/>
    <property type="project" value="InterPro"/>
</dbReference>
<dbReference type="GO" id="GO:0009432">
    <property type="term" value="P:SOS response"/>
    <property type="evidence" value="ECO:0007669"/>
    <property type="project" value="UniProtKB-UniRule"/>
</dbReference>
<dbReference type="CDD" id="cd06529">
    <property type="entry name" value="S24_LexA-like"/>
    <property type="match status" value="1"/>
</dbReference>
<dbReference type="FunFam" id="1.10.10.10:FF:000009">
    <property type="entry name" value="LexA repressor"/>
    <property type="match status" value="1"/>
</dbReference>
<dbReference type="FunFam" id="2.10.109.10:FF:000001">
    <property type="entry name" value="LexA repressor"/>
    <property type="match status" value="1"/>
</dbReference>
<dbReference type="Gene3D" id="2.10.109.10">
    <property type="entry name" value="Umud Fragment, subunit A"/>
    <property type="match status" value="1"/>
</dbReference>
<dbReference type="Gene3D" id="1.10.10.10">
    <property type="entry name" value="Winged helix-like DNA-binding domain superfamily/Winged helix DNA-binding domain"/>
    <property type="match status" value="1"/>
</dbReference>
<dbReference type="HAMAP" id="MF_00015">
    <property type="entry name" value="LexA"/>
    <property type="match status" value="1"/>
</dbReference>
<dbReference type="InterPro" id="IPR006200">
    <property type="entry name" value="LexA"/>
</dbReference>
<dbReference type="InterPro" id="IPR039418">
    <property type="entry name" value="LexA-like"/>
</dbReference>
<dbReference type="InterPro" id="IPR036286">
    <property type="entry name" value="LexA/Signal_pep-like_sf"/>
</dbReference>
<dbReference type="InterPro" id="IPR006199">
    <property type="entry name" value="LexA_DNA-bd_dom"/>
</dbReference>
<dbReference type="InterPro" id="IPR050077">
    <property type="entry name" value="LexA_repressor"/>
</dbReference>
<dbReference type="InterPro" id="IPR006197">
    <property type="entry name" value="Peptidase_S24_LexA"/>
</dbReference>
<dbReference type="InterPro" id="IPR015927">
    <property type="entry name" value="Peptidase_S24_S26A/B/C"/>
</dbReference>
<dbReference type="InterPro" id="IPR036388">
    <property type="entry name" value="WH-like_DNA-bd_sf"/>
</dbReference>
<dbReference type="InterPro" id="IPR036390">
    <property type="entry name" value="WH_DNA-bd_sf"/>
</dbReference>
<dbReference type="NCBIfam" id="TIGR00498">
    <property type="entry name" value="lexA"/>
    <property type="match status" value="1"/>
</dbReference>
<dbReference type="PANTHER" id="PTHR33516">
    <property type="entry name" value="LEXA REPRESSOR"/>
    <property type="match status" value="1"/>
</dbReference>
<dbReference type="PANTHER" id="PTHR33516:SF2">
    <property type="entry name" value="LEXA REPRESSOR-RELATED"/>
    <property type="match status" value="1"/>
</dbReference>
<dbReference type="Pfam" id="PF01726">
    <property type="entry name" value="LexA_DNA_bind"/>
    <property type="match status" value="1"/>
</dbReference>
<dbReference type="Pfam" id="PF00717">
    <property type="entry name" value="Peptidase_S24"/>
    <property type="match status" value="1"/>
</dbReference>
<dbReference type="PRINTS" id="PR00726">
    <property type="entry name" value="LEXASERPTASE"/>
</dbReference>
<dbReference type="SUPFAM" id="SSF51306">
    <property type="entry name" value="LexA/Signal peptidase"/>
    <property type="match status" value="1"/>
</dbReference>
<dbReference type="SUPFAM" id="SSF46785">
    <property type="entry name" value="Winged helix' DNA-binding domain"/>
    <property type="match status" value="1"/>
</dbReference>
<accession>B7VM94</accession>
<comment type="function">
    <text evidence="1">Represses a number of genes involved in the response to DNA damage (SOS response), including recA and lexA. In the presence of single-stranded DNA, RecA interacts with LexA causing an autocatalytic cleavage which disrupts the DNA-binding part of LexA, leading to derepression of the SOS regulon and eventually DNA repair.</text>
</comment>
<comment type="catalytic activity">
    <reaction evidence="1">
        <text>Hydrolysis of Ala-|-Gly bond in repressor LexA.</text>
        <dbReference type="EC" id="3.4.21.88"/>
    </reaction>
</comment>
<comment type="subunit">
    <text evidence="1">Homodimer.</text>
</comment>
<comment type="similarity">
    <text evidence="1">Belongs to the peptidase S24 family.</text>
</comment>
<proteinExistence type="inferred from homology"/>
<keyword id="KW-0068">Autocatalytic cleavage</keyword>
<keyword id="KW-0227">DNA damage</keyword>
<keyword id="KW-0234">DNA repair</keyword>
<keyword id="KW-0235">DNA replication</keyword>
<keyword id="KW-0238">DNA-binding</keyword>
<keyword id="KW-0378">Hydrolase</keyword>
<keyword id="KW-0678">Repressor</keyword>
<keyword id="KW-0742">SOS response</keyword>
<keyword id="KW-0804">Transcription</keyword>
<keyword id="KW-0805">Transcription regulation</keyword>
<feature type="chain" id="PRO_1000192782" description="LexA repressor">
    <location>
        <begin position="1"/>
        <end position="206"/>
    </location>
</feature>
<feature type="DNA-binding region" description="H-T-H motif" evidence="1">
    <location>
        <begin position="28"/>
        <end position="48"/>
    </location>
</feature>
<feature type="active site" description="For autocatalytic cleavage activity" evidence="1">
    <location>
        <position position="123"/>
    </location>
</feature>
<feature type="active site" description="For autocatalytic cleavage activity" evidence="1">
    <location>
        <position position="160"/>
    </location>
</feature>
<feature type="site" description="Cleavage; by autolysis" evidence="1">
    <location>
        <begin position="88"/>
        <end position="89"/>
    </location>
</feature>
<evidence type="ECO:0000255" key="1">
    <source>
        <dbReference type="HAMAP-Rule" id="MF_00015"/>
    </source>
</evidence>
<reference key="1">
    <citation type="submission" date="2009-02" db="EMBL/GenBank/DDBJ databases">
        <title>Vibrio splendidus str. LGP32 complete genome.</title>
        <authorList>
            <person name="Mazel D."/>
            <person name="Le Roux F."/>
        </authorList>
    </citation>
    <scope>NUCLEOTIDE SEQUENCE [LARGE SCALE GENOMIC DNA]</scope>
    <source>
        <strain>LGP32</strain>
    </source>
</reference>
<protein>
    <recommendedName>
        <fullName evidence="1">LexA repressor</fullName>
        <ecNumber evidence="1">3.4.21.88</ecNumber>
    </recommendedName>
</protein>